<keyword id="KW-0067">ATP-binding</keyword>
<keyword id="KW-0963">Cytoplasm</keyword>
<keyword id="KW-0460">Magnesium</keyword>
<keyword id="KW-0479">Metal-binding</keyword>
<keyword id="KW-0547">Nucleotide-binding</keyword>
<keyword id="KW-0554">One-carbon metabolism</keyword>
<keyword id="KW-0630">Potassium</keyword>
<keyword id="KW-0808">Transferase</keyword>
<organism>
    <name type="scientific">Mycobacterium leprae (strain Br4923)</name>
    <dbReference type="NCBI Taxonomy" id="561304"/>
    <lineage>
        <taxon>Bacteria</taxon>
        <taxon>Bacillati</taxon>
        <taxon>Actinomycetota</taxon>
        <taxon>Actinomycetes</taxon>
        <taxon>Mycobacteriales</taxon>
        <taxon>Mycobacteriaceae</taxon>
        <taxon>Mycobacterium</taxon>
    </lineage>
</organism>
<accession>B8ZUM2</accession>
<feature type="chain" id="PRO_1000196721" description="S-adenosylmethionine synthase">
    <location>
        <begin position="1"/>
        <end position="403"/>
    </location>
</feature>
<feature type="region of interest" description="Flexible loop" evidence="1">
    <location>
        <begin position="104"/>
        <end position="114"/>
    </location>
</feature>
<feature type="binding site" description="in other chain" evidence="1">
    <location>
        <position position="17"/>
    </location>
    <ligand>
        <name>ATP</name>
        <dbReference type="ChEBI" id="CHEBI:30616"/>
        <note>ligand shared between two neighboring subunits</note>
    </ligand>
</feature>
<feature type="binding site" evidence="1">
    <location>
        <position position="19"/>
    </location>
    <ligand>
        <name>Mg(2+)</name>
        <dbReference type="ChEBI" id="CHEBI:18420"/>
    </ligand>
</feature>
<feature type="binding site" evidence="1">
    <location>
        <position position="45"/>
    </location>
    <ligand>
        <name>K(+)</name>
        <dbReference type="ChEBI" id="CHEBI:29103"/>
    </ligand>
</feature>
<feature type="binding site" description="in other chain" evidence="1">
    <location>
        <position position="58"/>
    </location>
    <ligand>
        <name>L-methionine</name>
        <dbReference type="ChEBI" id="CHEBI:57844"/>
        <note>ligand shared between two neighboring subunits</note>
    </ligand>
</feature>
<feature type="binding site" description="in other chain" evidence="1">
    <location>
        <position position="104"/>
    </location>
    <ligand>
        <name>L-methionine</name>
        <dbReference type="ChEBI" id="CHEBI:57844"/>
        <note>ligand shared between two neighboring subunits</note>
    </ligand>
</feature>
<feature type="binding site" description="in other chain" evidence="1">
    <location>
        <begin position="179"/>
        <end position="181"/>
    </location>
    <ligand>
        <name>ATP</name>
        <dbReference type="ChEBI" id="CHEBI:30616"/>
        <note>ligand shared between two neighboring subunits</note>
    </ligand>
</feature>
<feature type="binding site" description="in other chain" evidence="1">
    <location>
        <begin position="250"/>
        <end position="251"/>
    </location>
    <ligand>
        <name>ATP</name>
        <dbReference type="ChEBI" id="CHEBI:30616"/>
        <note>ligand shared between two neighboring subunits</note>
    </ligand>
</feature>
<feature type="binding site" evidence="1">
    <location>
        <position position="259"/>
    </location>
    <ligand>
        <name>ATP</name>
        <dbReference type="ChEBI" id="CHEBI:30616"/>
        <note>ligand shared between two neighboring subunits</note>
    </ligand>
</feature>
<feature type="binding site" evidence="1">
    <location>
        <position position="259"/>
    </location>
    <ligand>
        <name>L-methionine</name>
        <dbReference type="ChEBI" id="CHEBI:57844"/>
        <note>ligand shared between two neighboring subunits</note>
    </ligand>
</feature>
<feature type="binding site" description="in other chain" evidence="1">
    <location>
        <begin position="265"/>
        <end position="266"/>
    </location>
    <ligand>
        <name>ATP</name>
        <dbReference type="ChEBI" id="CHEBI:30616"/>
        <note>ligand shared between two neighboring subunits</note>
    </ligand>
</feature>
<feature type="binding site" evidence="1">
    <location>
        <position position="282"/>
    </location>
    <ligand>
        <name>ATP</name>
        <dbReference type="ChEBI" id="CHEBI:30616"/>
        <note>ligand shared between two neighboring subunits</note>
    </ligand>
</feature>
<feature type="binding site" evidence="1">
    <location>
        <position position="286"/>
    </location>
    <ligand>
        <name>ATP</name>
        <dbReference type="ChEBI" id="CHEBI:30616"/>
        <note>ligand shared between two neighboring subunits</note>
    </ligand>
</feature>
<feature type="binding site" description="in other chain" evidence="1">
    <location>
        <position position="290"/>
    </location>
    <ligand>
        <name>L-methionine</name>
        <dbReference type="ChEBI" id="CHEBI:57844"/>
        <note>ligand shared between two neighboring subunits</note>
    </ligand>
</feature>
<name>METK_MYCLB</name>
<reference key="1">
    <citation type="journal article" date="2009" name="Nat. Genet.">
        <title>Comparative genomic and phylogeographic analysis of Mycobacterium leprae.</title>
        <authorList>
            <person name="Monot M."/>
            <person name="Honore N."/>
            <person name="Garnier T."/>
            <person name="Zidane N."/>
            <person name="Sherafi D."/>
            <person name="Paniz-Mondolfi A."/>
            <person name="Matsuoka M."/>
            <person name="Taylor G.M."/>
            <person name="Donoghue H.D."/>
            <person name="Bouwman A."/>
            <person name="Mays S."/>
            <person name="Watson C."/>
            <person name="Lockwood D."/>
            <person name="Khamispour A."/>
            <person name="Dowlati Y."/>
            <person name="Jianping S."/>
            <person name="Rea T.H."/>
            <person name="Vera-Cabrera L."/>
            <person name="Stefani M.M."/>
            <person name="Banu S."/>
            <person name="Macdonald M."/>
            <person name="Sapkota B.R."/>
            <person name="Spencer J.S."/>
            <person name="Thomas J."/>
            <person name="Harshman K."/>
            <person name="Singh P."/>
            <person name="Busso P."/>
            <person name="Gattiker A."/>
            <person name="Rougemont J."/>
            <person name="Brennan P.J."/>
            <person name="Cole S.T."/>
        </authorList>
    </citation>
    <scope>NUCLEOTIDE SEQUENCE [LARGE SCALE GENOMIC DNA]</scope>
    <source>
        <strain>Br4923</strain>
    </source>
</reference>
<evidence type="ECO:0000255" key="1">
    <source>
        <dbReference type="HAMAP-Rule" id="MF_00086"/>
    </source>
</evidence>
<comment type="function">
    <text evidence="1">Catalyzes the formation of S-adenosylmethionine (AdoMet) from methionine and ATP. The overall synthetic reaction is composed of two sequential steps, AdoMet formation and the subsequent tripolyphosphate hydrolysis which occurs prior to release of AdoMet from the enzyme.</text>
</comment>
<comment type="catalytic activity">
    <reaction evidence="1">
        <text>L-methionine + ATP + H2O = S-adenosyl-L-methionine + phosphate + diphosphate</text>
        <dbReference type="Rhea" id="RHEA:21080"/>
        <dbReference type="ChEBI" id="CHEBI:15377"/>
        <dbReference type="ChEBI" id="CHEBI:30616"/>
        <dbReference type="ChEBI" id="CHEBI:33019"/>
        <dbReference type="ChEBI" id="CHEBI:43474"/>
        <dbReference type="ChEBI" id="CHEBI:57844"/>
        <dbReference type="ChEBI" id="CHEBI:59789"/>
        <dbReference type="EC" id="2.5.1.6"/>
    </reaction>
</comment>
<comment type="cofactor">
    <cofactor evidence="1">
        <name>Mg(2+)</name>
        <dbReference type="ChEBI" id="CHEBI:18420"/>
    </cofactor>
    <text evidence="1">Binds 2 divalent ions per subunit.</text>
</comment>
<comment type="cofactor">
    <cofactor evidence="1">
        <name>K(+)</name>
        <dbReference type="ChEBI" id="CHEBI:29103"/>
    </cofactor>
    <text evidence="1">Binds 1 potassium ion per subunit.</text>
</comment>
<comment type="pathway">
    <text evidence="1">Amino-acid biosynthesis; S-adenosyl-L-methionine biosynthesis; S-adenosyl-L-methionine from L-methionine: step 1/1.</text>
</comment>
<comment type="subunit">
    <text evidence="1">Homotetramer; dimer of dimers.</text>
</comment>
<comment type="subcellular location">
    <subcellularLocation>
        <location evidence="1">Cytoplasm</location>
    </subcellularLocation>
</comment>
<comment type="similarity">
    <text evidence="1">Belongs to the AdoMet synthase family.</text>
</comment>
<sequence length="403" mass="42921">MSEKGRLFTSESVTEGHPDKICDAISDSILDALLAEDPCSRVAVETLVTTGQVHVVGEVTTLAKTAFADISNTVRERILDIGYDSSDKGFDGASCGVNIGIGAQSSDIAQGVNTAHEVRVEGAADPLDAQGAGDQGLMFGYAINDTPELMPLPIALAHRLARRLTEVRKNGVLPYLRSDGKTQVTIAYEDNVPVRLDTVVISTQHAAGVDLDATLAPDIREKVLNTVIDDLSHDTLDVSSVRVLVNPTGKFVLGGPMGDAGLTGRKIIVDTYGGWARHGGGAFSGKDPSKVDRSAAYAMRWVAKNIVAAGLAERIEVQVAYAIGKAAPVGLFVETFGTEAVDPAKIEKAIGEVFDLRPGAIIRDLHLLRPIYAQTAAYGHFGRTDVELPWEQLNKVDDLKRAI</sequence>
<dbReference type="EC" id="2.5.1.6" evidence="1"/>
<dbReference type="EMBL" id="FM211192">
    <property type="protein sequence ID" value="CAR70637.1"/>
    <property type="molecule type" value="Genomic_DNA"/>
</dbReference>
<dbReference type="SMR" id="B8ZUM2"/>
<dbReference type="KEGG" id="mlb:MLBr00544"/>
<dbReference type="HOGENOM" id="CLU_041802_1_1_11"/>
<dbReference type="UniPathway" id="UPA00315">
    <property type="reaction ID" value="UER00080"/>
</dbReference>
<dbReference type="Proteomes" id="UP000006900">
    <property type="component" value="Chromosome"/>
</dbReference>
<dbReference type="GO" id="GO:0005737">
    <property type="term" value="C:cytoplasm"/>
    <property type="evidence" value="ECO:0007669"/>
    <property type="project" value="UniProtKB-SubCell"/>
</dbReference>
<dbReference type="GO" id="GO:0005524">
    <property type="term" value="F:ATP binding"/>
    <property type="evidence" value="ECO:0007669"/>
    <property type="project" value="UniProtKB-UniRule"/>
</dbReference>
<dbReference type="GO" id="GO:0000287">
    <property type="term" value="F:magnesium ion binding"/>
    <property type="evidence" value="ECO:0007669"/>
    <property type="project" value="UniProtKB-UniRule"/>
</dbReference>
<dbReference type="GO" id="GO:0004478">
    <property type="term" value="F:methionine adenosyltransferase activity"/>
    <property type="evidence" value="ECO:0007669"/>
    <property type="project" value="UniProtKB-UniRule"/>
</dbReference>
<dbReference type="GO" id="GO:0006730">
    <property type="term" value="P:one-carbon metabolic process"/>
    <property type="evidence" value="ECO:0007669"/>
    <property type="project" value="UniProtKB-KW"/>
</dbReference>
<dbReference type="GO" id="GO:0006556">
    <property type="term" value="P:S-adenosylmethionine biosynthetic process"/>
    <property type="evidence" value="ECO:0007669"/>
    <property type="project" value="UniProtKB-UniRule"/>
</dbReference>
<dbReference type="CDD" id="cd18079">
    <property type="entry name" value="S-AdoMet_synt"/>
    <property type="match status" value="1"/>
</dbReference>
<dbReference type="FunFam" id="3.30.300.10:FF:000006">
    <property type="entry name" value="S-adenosylmethionine synthase"/>
    <property type="match status" value="1"/>
</dbReference>
<dbReference type="Gene3D" id="3.30.300.10">
    <property type="match status" value="3"/>
</dbReference>
<dbReference type="HAMAP" id="MF_00086">
    <property type="entry name" value="S_AdoMet_synth1"/>
    <property type="match status" value="1"/>
</dbReference>
<dbReference type="InterPro" id="IPR022631">
    <property type="entry name" value="ADOMET_SYNTHASE_CS"/>
</dbReference>
<dbReference type="InterPro" id="IPR022630">
    <property type="entry name" value="S-AdoMet_synt_C"/>
</dbReference>
<dbReference type="InterPro" id="IPR022629">
    <property type="entry name" value="S-AdoMet_synt_central"/>
</dbReference>
<dbReference type="InterPro" id="IPR022628">
    <property type="entry name" value="S-AdoMet_synt_N"/>
</dbReference>
<dbReference type="InterPro" id="IPR002133">
    <property type="entry name" value="S-AdoMet_synthetase"/>
</dbReference>
<dbReference type="InterPro" id="IPR022636">
    <property type="entry name" value="S-AdoMet_synthetase_sfam"/>
</dbReference>
<dbReference type="NCBIfam" id="TIGR01034">
    <property type="entry name" value="metK"/>
    <property type="match status" value="1"/>
</dbReference>
<dbReference type="PANTHER" id="PTHR11964">
    <property type="entry name" value="S-ADENOSYLMETHIONINE SYNTHETASE"/>
    <property type="match status" value="1"/>
</dbReference>
<dbReference type="Pfam" id="PF02773">
    <property type="entry name" value="S-AdoMet_synt_C"/>
    <property type="match status" value="1"/>
</dbReference>
<dbReference type="Pfam" id="PF02772">
    <property type="entry name" value="S-AdoMet_synt_M"/>
    <property type="match status" value="1"/>
</dbReference>
<dbReference type="Pfam" id="PF00438">
    <property type="entry name" value="S-AdoMet_synt_N"/>
    <property type="match status" value="1"/>
</dbReference>
<dbReference type="PIRSF" id="PIRSF000497">
    <property type="entry name" value="MAT"/>
    <property type="match status" value="1"/>
</dbReference>
<dbReference type="SUPFAM" id="SSF55973">
    <property type="entry name" value="S-adenosylmethionine synthetase"/>
    <property type="match status" value="3"/>
</dbReference>
<dbReference type="PROSITE" id="PS00376">
    <property type="entry name" value="ADOMET_SYNTHASE_1"/>
    <property type="match status" value="1"/>
</dbReference>
<dbReference type="PROSITE" id="PS00377">
    <property type="entry name" value="ADOMET_SYNTHASE_2"/>
    <property type="match status" value="1"/>
</dbReference>
<protein>
    <recommendedName>
        <fullName evidence="1">S-adenosylmethionine synthase</fullName>
        <shortName evidence="1">AdoMet synthase</shortName>
        <ecNumber evidence="1">2.5.1.6</ecNumber>
    </recommendedName>
    <alternativeName>
        <fullName evidence="1">MAT</fullName>
    </alternativeName>
    <alternativeName>
        <fullName evidence="1">Methionine adenosyltransferase</fullName>
    </alternativeName>
</protein>
<proteinExistence type="inferred from homology"/>
<gene>
    <name evidence="1" type="primary">metK</name>
    <name type="ordered locus">MLBr00544</name>
</gene>